<sequence length="154" mass="17340">MATFVQKPAEVEKKWILIDAEGLVVGRLASLIANRLRGKHKATYTPHVDDGDNVIVINAEKAVLTGKKYTDKKYYWHTGYPGGIKERTARQIIEGRFPERVIEKAVERMVPRGPLGRRQMKNLRVYAGSNHPHEAQQPAVLDVAKLNSKNTRSA</sequence>
<reference key="1">
    <citation type="journal article" date="2001" name="Proc. Natl. Acad. Sci. U.S.A.">
        <title>Analysis of the chromosome sequence of the legume symbiont Sinorhizobium meliloti strain 1021.</title>
        <authorList>
            <person name="Capela D."/>
            <person name="Barloy-Hubler F."/>
            <person name="Gouzy J."/>
            <person name="Bothe G."/>
            <person name="Ampe F."/>
            <person name="Batut J."/>
            <person name="Boistard P."/>
            <person name="Becker A."/>
            <person name="Boutry M."/>
            <person name="Cadieu E."/>
            <person name="Dreano S."/>
            <person name="Gloux S."/>
            <person name="Godrie T."/>
            <person name="Goffeau A."/>
            <person name="Kahn D."/>
            <person name="Kiss E."/>
            <person name="Lelaure V."/>
            <person name="Masuy D."/>
            <person name="Pohl T."/>
            <person name="Portetelle D."/>
            <person name="Puehler A."/>
            <person name="Purnelle B."/>
            <person name="Ramsperger U."/>
            <person name="Renard C."/>
            <person name="Thebault P."/>
            <person name="Vandenbol M."/>
            <person name="Weidner S."/>
            <person name="Galibert F."/>
        </authorList>
    </citation>
    <scope>NUCLEOTIDE SEQUENCE [LARGE SCALE GENOMIC DNA]</scope>
    <source>
        <strain>1021</strain>
    </source>
</reference>
<reference key="2">
    <citation type="journal article" date="2001" name="Science">
        <title>The composite genome of the legume symbiont Sinorhizobium meliloti.</title>
        <authorList>
            <person name="Galibert F."/>
            <person name="Finan T.M."/>
            <person name="Long S.R."/>
            <person name="Puehler A."/>
            <person name="Abola P."/>
            <person name="Ampe F."/>
            <person name="Barloy-Hubler F."/>
            <person name="Barnett M.J."/>
            <person name="Becker A."/>
            <person name="Boistard P."/>
            <person name="Bothe G."/>
            <person name="Boutry M."/>
            <person name="Bowser L."/>
            <person name="Buhrmester J."/>
            <person name="Cadieu E."/>
            <person name="Capela D."/>
            <person name="Chain P."/>
            <person name="Cowie A."/>
            <person name="Davis R.W."/>
            <person name="Dreano S."/>
            <person name="Federspiel N.A."/>
            <person name="Fisher R.F."/>
            <person name="Gloux S."/>
            <person name="Godrie T."/>
            <person name="Goffeau A."/>
            <person name="Golding B."/>
            <person name="Gouzy J."/>
            <person name="Gurjal M."/>
            <person name="Hernandez-Lucas I."/>
            <person name="Hong A."/>
            <person name="Huizar L."/>
            <person name="Hyman R.W."/>
            <person name="Jones T."/>
            <person name="Kahn D."/>
            <person name="Kahn M.L."/>
            <person name="Kalman S."/>
            <person name="Keating D.H."/>
            <person name="Kiss E."/>
            <person name="Komp C."/>
            <person name="Lelaure V."/>
            <person name="Masuy D."/>
            <person name="Palm C."/>
            <person name="Peck M.C."/>
            <person name="Pohl T.M."/>
            <person name="Portetelle D."/>
            <person name="Purnelle B."/>
            <person name="Ramsperger U."/>
            <person name="Surzycki R."/>
            <person name="Thebault P."/>
            <person name="Vandenbol M."/>
            <person name="Vorhoelter F.J."/>
            <person name="Weidner S."/>
            <person name="Wells D.H."/>
            <person name="Wong K."/>
            <person name="Yeh K.-C."/>
            <person name="Batut J."/>
        </authorList>
    </citation>
    <scope>NUCLEOTIDE SEQUENCE [LARGE SCALE GENOMIC DNA]</scope>
    <source>
        <strain>1021</strain>
    </source>
</reference>
<comment type="function">
    <text evidence="1">This protein is one of the early assembly proteins of the 50S ribosomal subunit, although it is not seen to bind rRNA by itself. It is important during the early stages of 50S assembly.</text>
</comment>
<comment type="subunit">
    <text evidence="1">Part of the 50S ribosomal subunit.</text>
</comment>
<comment type="similarity">
    <text evidence="1">Belongs to the universal ribosomal protein uL13 family.</text>
</comment>
<proteinExistence type="inferred from homology"/>
<name>RL13_RHIME</name>
<evidence type="ECO:0000255" key="1">
    <source>
        <dbReference type="HAMAP-Rule" id="MF_01366"/>
    </source>
</evidence>
<evidence type="ECO:0000305" key="2"/>
<gene>
    <name evidence="1" type="primary">rplM</name>
    <name type="ordered locus">R01243</name>
    <name type="ORF">SMc01804</name>
</gene>
<organism>
    <name type="scientific">Rhizobium meliloti (strain 1021)</name>
    <name type="common">Ensifer meliloti</name>
    <name type="synonym">Sinorhizobium meliloti</name>
    <dbReference type="NCBI Taxonomy" id="266834"/>
    <lineage>
        <taxon>Bacteria</taxon>
        <taxon>Pseudomonadati</taxon>
        <taxon>Pseudomonadota</taxon>
        <taxon>Alphaproteobacteria</taxon>
        <taxon>Hyphomicrobiales</taxon>
        <taxon>Rhizobiaceae</taxon>
        <taxon>Sinorhizobium/Ensifer group</taxon>
        <taxon>Sinorhizobium</taxon>
    </lineage>
</organism>
<protein>
    <recommendedName>
        <fullName evidence="1">Large ribosomal subunit protein uL13</fullName>
    </recommendedName>
    <alternativeName>
        <fullName evidence="2">50S ribosomal protein L13</fullName>
    </alternativeName>
</protein>
<keyword id="KW-1185">Reference proteome</keyword>
<keyword id="KW-0687">Ribonucleoprotein</keyword>
<keyword id="KW-0689">Ribosomal protein</keyword>
<accession>Q92QR4</accession>
<feature type="chain" id="PRO_0000261784" description="Large ribosomal subunit protein uL13">
    <location>
        <begin position="1"/>
        <end position="154"/>
    </location>
</feature>
<dbReference type="EMBL" id="AL591688">
    <property type="protein sequence ID" value="CAC45822.1"/>
    <property type="molecule type" value="Genomic_DNA"/>
</dbReference>
<dbReference type="RefSeq" id="NP_385349.1">
    <property type="nucleotide sequence ID" value="NC_003047.1"/>
</dbReference>
<dbReference type="RefSeq" id="WP_003529229.1">
    <property type="nucleotide sequence ID" value="NC_003047.1"/>
</dbReference>
<dbReference type="SMR" id="Q92QR4"/>
<dbReference type="EnsemblBacteria" id="CAC45822">
    <property type="protein sequence ID" value="CAC45822"/>
    <property type="gene ID" value="SMc01804"/>
</dbReference>
<dbReference type="KEGG" id="sme:SMc01804"/>
<dbReference type="PATRIC" id="fig|266834.11.peg.2655"/>
<dbReference type="eggNOG" id="COG0102">
    <property type="taxonomic scope" value="Bacteria"/>
</dbReference>
<dbReference type="HOGENOM" id="CLU_082184_2_0_5"/>
<dbReference type="OrthoDB" id="9801330at2"/>
<dbReference type="Proteomes" id="UP000001976">
    <property type="component" value="Chromosome"/>
</dbReference>
<dbReference type="GO" id="GO:0022625">
    <property type="term" value="C:cytosolic large ribosomal subunit"/>
    <property type="evidence" value="ECO:0007669"/>
    <property type="project" value="TreeGrafter"/>
</dbReference>
<dbReference type="GO" id="GO:0003729">
    <property type="term" value="F:mRNA binding"/>
    <property type="evidence" value="ECO:0007669"/>
    <property type="project" value="TreeGrafter"/>
</dbReference>
<dbReference type="GO" id="GO:0003735">
    <property type="term" value="F:structural constituent of ribosome"/>
    <property type="evidence" value="ECO:0007669"/>
    <property type="project" value="InterPro"/>
</dbReference>
<dbReference type="GO" id="GO:0017148">
    <property type="term" value="P:negative regulation of translation"/>
    <property type="evidence" value="ECO:0007669"/>
    <property type="project" value="TreeGrafter"/>
</dbReference>
<dbReference type="GO" id="GO:0006412">
    <property type="term" value="P:translation"/>
    <property type="evidence" value="ECO:0007669"/>
    <property type="project" value="UniProtKB-UniRule"/>
</dbReference>
<dbReference type="CDD" id="cd00392">
    <property type="entry name" value="Ribosomal_L13"/>
    <property type="match status" value="1"/>
</dbReference>
<dbReference type="FunFam" id="3.90.1180.10:FF:000001">
    <property type="entry name" value="50S ribosomal protein L13"/>
    <property type="match status" value="1"/>
</dbReference>
<dbReference type="Gene3D" id="3.90.1180.10">
    <property type="entry name" value="Ribosomal protein L13"/>
    <property type="match status" value="1"/>
</dbReference>
<dbReference type="HAMAP" id="MF_01366">
    <property type="entry name" value="Ribosomal_uL13"/>
    <property type="match status" value="1"/>
</dbReference>
<dbReference type="InterPro" id="IPR005822">
    <property type="entry name" value="Ribosomal_uL13"/>
</dbReference>
<dbReference type="InterPro" id="IPR005823">
    <property type="entry name" value="Ribosomal_uL13_bac-type"/>
</dbReference>
<dbReference type="InterPro" id="IPR036899">
    <property type="entry name" value="Ribosomal_uL13_sf"/>
</dbReference>
<dbReference type="NCBIfam" id="TIGR01066">
    <property type="entry name" value="rplM_bact"/>
    <property type="match status" value="1"/>
</dbReference>
<dbReference type="PANTHER" id="PTHR11545:SF2">
    <property type="entry name" value="LARGE RIBOSOMAL SUBUNIT PROTEIN UL13M"/>
    <property type="match status" value="1"/>
</dbReference>
<dbReference type="PANTHER" id="PTHR11545">
    <property type="entry name" value="RIBOSOMAL PROTEIN L13"/>
    <property type="match status" value="1"/>
</dbReference>
<dbReference type="Pfam" id="PF00572">
    <property type="entry name" value="Ribosomal_L13"/>
    <property type="match status" value="1"/>
</dbReference>
<dbReference type="PIRSF" id="PIRSF002181">
    <property type="entry name" value="Ribosomal_L13"/>
    <property type="match status" value="1"/>
</dbReference>
<dbReference type="SUPFAM" id="SSF52161">
    <property type="entry name" value="Ribosomal protein L13"/>
    <property type="match status" value="1"/>
</dbReference>